<dbReference type="EMBL" id="L27083">
    <property type="protein sequence ID" value="AAA98268.1"/>
    <property type="status" value="ALT_INIT"/>
    <property type="molecule type" value="Genomic_DNA"/>
</dbReference>
<dbReference type="RefSeq" id="WP_001159868.1">
    <property type="nucleotide sequence ID" value="NZ_WWEV01000072.1"/>
</dbReference>
<dbReference type="RefSeq" id="YP_003108267.1">
    <property type="nucleotide sequence ID" value="NC_013122.1"/>
</dbReference>
<dbReference type="SMR" id="Q52042"/>
<dbReference type="GO" id="GO:0008657">
    <property type="term" value="F:DNA topoisomerase type II (double strand cut, ATP-hydrolyzing) inhibitor activity"/>
    <property type="evidence" value="ECO:0007669"/>
    <property type="project" value="InterPro"/>
</dbReference>
<dbReference type="GO" id="GO:0006276">
    <property type="term" value="P:plasmid maintenance"/>
    <property type="evidence" value="ECO:0007669"/>
    <property type="project" value="InterPro"/>
</dbReference>
<dbReference type="Gene3D" id="2.30.30.110">
    <property type="match status" value="1"/>
</dbReference>
<dbReference type="InterPro" id="IPR002712">
    <property type="entry name" value="CcdB"/>
</dbReference>
<dbReference type="InterPro" id="IPR011067">
    <property type="entry name" value="Plasmid_toxin/cell-grow_inhib"/>
</dbReference>
<dbReference type="NCBIfam" id="NF010262">
    <property type="entry name" value="PRK13708.1"/>
    <property type="match status" value="1"/>
</dbReference>
<dbReference type="Pfam" id="PF01845">
    <property type="entry name" value="CcdB"/>
    <property type="match status" value="1"/>
</dbReference>
<dbReference type="SUPFAM" id="SSF50118">
    <property type="entry name" value="Cell growth inhibitor/plasmid maintenance toxic component"/>
    <property type="match status" value="1"/>
</dbReference>
<gene>
    <name type="primary">ccdB</name>
    <name type="synonym">letB</name>
</gene>
<organism>
    <name type="scientific">Escherichia coli</name>
    <dbReference type="NCBI Taxonomy" id="562"/>
    <lineage>
        <taxon>Bacteria</taxon>
        <taxon>Pseudomonadati</taxon>
        <taxon>Pseudomonadota</taxon>
        <taxon>Gammaproteobacteria</taxon>
        <taxon>Enterobacterales</taxon>
        <taxon>Enterobacteriaceae</taxon>
        <taxon>Escherichia</taxon>
    </lineage>
</organism>
<accession>Q52042</accession>
<comment type="function">
    <text evidence="1">Toxic component of a type II toxin-antitoxin (TA) system, functioning in plasmid maintainence. Responsible for the post-segregational killing (PSK) of plasmid-free cells, also referred to as a plasmid addiction system. Half-life of over 2 hours. Interferes with the activity of DNA gyrase, inducing it to form a covalent GyrA-DNA complex that cannot be resolved, thus promoting breakage of plasmid and chromosomal DNA. Toxicity is inhibited by labile antitoxin CcdA, which blocks the activity of CcdB; CcdA also removes bound CcdB protein from the CcdB-GyrA complex by forming a CcdA-CcdB complex, a process termed rejuvenation. Functions as a transcriptional corepressor for the ccdAB operon, repression also requires CcdA (By similarity).</text>
</comment>
<comment type="subunit">
    <text evidence="1">Homodimer. Forms a complex with GyrA, probably a tetramer GyrA(2)CcdB(2), in which GyrA is inactive. Forms a complex with toxin CcdB; the CcdA-CcdB(2) trimer is sufficient for rejuvenation, whereas maximal operon repression occurs with CcdA(2)CcdB(2) (By similarity).</text>
</comment>
<comment type="similarity">
    <text evidence="2">Belongs to the CcdB toxin family.</text>
</comment>
<comment type="sequence caution" evidence="2">
    <conflict type="erroneous initiation">
        <sequence resource="EMBL-CDS" id="AAA98268"/>
    </conflict>
    <text>Extended N-terminus.</text>
</comment>
<keyword id="KW-0614">Plasmid</keyword>
<keyword id="KW-0678">Repressor</keyword>
<keyword id="KW-1277">Toxin-antitoxin system</keyword>
<keyword id="KW-0804">Transcription</keyword>
<keyword id="KW-0805">Transcription regulation</keyword>
<evidence type="ECO:0000250" key="1"/>
<evidence type="ECO:0000305" key="2"/>
<feature type="chain" id="PRO_0000068389" description="Toxin CcdB">
    <location>
        <begin position="1"/>
        <end position="101"/>
    </location>
</feature>
<protein>
    <recommendedName>
        <fullName>Toxin CcdB</fullName>
    </recommendedName>
    <alternativeName>
        <fullName>Cytotoxic protein CcdB</fullName>
    </alternativeName>
    <alternativeName>
        <fullName>Protein LetD</fullName>
    </alternativeName>
</protein>
<sequence>MQFKVYTYKRESRYRLFVDVQSDIIDTPGRRMVIPLASARLLSDKVSRELYPVVHIGDESWRMMTTDMASVPVSVIGEEVADLSHRENDIKNAINLMFWGI</sequence>
<reference key="1">
    <citation type="journal article" date="1994" name="Gene">
        <title>Positive-selection vectors using the F plasmid ccdB killer gene.</title>
        <authorList>
            <person name="Bernard P."/>
            <person name="Gabant P."/>
            <person name="Bahassi E.M."/>
            <person name="Couturier M."/>
        </authorList>
    </citation>
    <scope>NUCLEOTIDE SEQUENCE [GENOMIC DNA]</scope>
</reference>
<geneLocation type="plasmid">
    <name>pKIL18</name>
</geneLocation>
<proteinExistence type="inferred from homology"/>
<name>CCDB3_ECOLX</name>